<proteinExistence type="inferred from homology"/>
<evidence type="ECO:0000256" key="1">
    <source>
        <dbReference type="SAM" id="MobiDB-lite"/>
    </source>
</evidence>
<evidence type="ECO:0000305" key="2"/>
<accession>B0X755</accession>
<gene>
    <name type="ORF">CPIJ015043</name>
</gene>
<keyword id="KW-1185">Reference proteome</keyword>
<reference key="1">
    <citation type="submission" date="2007-03" db="EMBL/GenBank/DDBJ databases">
        <title>Annotation of Culex pipiens quinquefasciatus.</title>
        <authorList>
            <consortium name="The Broad Institute Genome Sequencing Platform"/>
            <person name="Atkinson P.W."/>
            <person name="Hemingway J."/>
            <person name="Christensen B.M."/>
            <person name="Higgs S."/>
            <person name="Kodira C.D."/>
            <person name="Hannick L.I."/>
            <person name="Megy K."/>
            <person name="O'Leary S.B."/>
            <person name="Pearson M."/>
            <person name="Haas B.J."/>
            <person name="Mauceli E."/>
            <person name="Wortman J.R."/>
            <person name="Lee N.H."/>
            <person name="Guigo R."/>
            <person name="Stanke M."/>
            <person name="Alvarado L."/>
            <person name="Amedeo P."/>
            <person name="Antoine C.H."/>
            <person name="Arensburger P."/>
            <person name="Bidwell S.L."/>
            <person name="Crawford M."/>
            <person name="Camaro F."/>
            <person name="Devon K."/>
            <person name="Engels R."/>
            <person name="Hammond M."/>
            <person name="Howarth C."/>
            <person name="Koehrsen M."/>
            <person name="Lawson D."/>
            <person name="Montgomery P."/>
            <person name="Nene V."/>
            <person name="Nusbaum C."/>
            <person name="Puiu D."/>
            <person name="Romero-Severson J."/>
            <person name="Severson D.W."/>
            <person name="Shumway M."/>
            <person name="Sisk P."/>
            <person name="Stolte C."/>
            <person name="Zeng Q."/>
            <person name="Eisenstadt E."/>
            <person name="Fraser-Liggett C.M."/>
            <person name="Strausberg R."/>
            <person name="Galagan J."/>
            <person name="Birren B."/>
            <person name="Collins F.H."/>
        </authorList>
    </citation>
    <scope>NUCLEOTIDE SEQUENCE [LARGE SCALE GENOMIC DNA]</scope>
    <source>
        <strain>JHB</strain>
    </source>
</reference>
<organism>
    <name type="scientific">Culex quinquefasciatus</name>
    <name type="common">Southern house mosquito</name>
    <name type="synonym">Culex pungens</name>
    <dbReference type="NCBI Taxonomy" id="7176"/>
    <lineage>
        <taxon>Eukaryota</taxon>
        <taxon>Metazoa</taxon>
        <taxon>Ecdysozoa</taxon>
        <taxon>Arthropoda</taxon>
        <taxon>Hexapoda</taxon>
        <taxon>Insecta</taxon>
        <taxon>Pterygota</taxon>
        <taxon>Neoptera</taxon>
        <taxon>Endopterygota</taxon>
        <taxon>Diptera</taxon>
        <taxon>Nematocera</taxon>
        <taxon>Culicoidea</taxon>
        <taxon>Culicidae</taxon>
        <taxon>Culicinae</taxon>
        <taxon>Culicini</taxon>
        <taxon>Culex</taxon>
        <taxon>Culex</taxon>
    </lineage>
</organism>
<feature type="chain" id="PRO_0000379006" description="FHIP family protein CPIJ015043">
    <location>
        <begin position="1"/>
        <end position="997"/>
    </location>
</feature>
<feature type="region of interest" description="Disordered" evidence="1">
    <location>
        <begin position="558"/>
        <end position="579"/>
    </location>
</feature>
<feature type="region of interest" description="Disordered" evidence="1">
    <location>
        <begin position="759"/>
        <end position="922"/>
    </location>
</feature>
<feature type="compositionally biased region" description="Low complexity" evidence="1">
    <location>
        <begin position="569"/>
        <end position="579"/>
    </location>
</feature>
<feature type="compositionally biased region" description="Gly residues" evidence="1">
    <location>
        <begin position="763"/>
        <end position="780"/>
    </location>
</feature>
<feature type="compositionally biased region" description="Low complexity" evidence="1">
    <location>
        <begin position="781"/>
        <end position="792"/>
    </location>
</feature>
<feature type="compositionally biased region" description="Low complexity" evidence="1">
    <location>
        <begin position="830"/>
        <end position="889"/>
    </location>
</feature>
<feature type="compositionally biased region" description="Gly residues" evidence="1">
    <location>
        <begin position="911"/>
        <end position="922"/>
    </location>
</feature>
<dbReference type="EMBL" id="DS232438">
    <property type="protein sequence ID" value="EDS41749.1"/>
    <property type="molecule type" value="Genomic_DNA"/>
</dbReference>
<dbReference type="RefSeq" id="XP_001865477.1">
    <property type="nucleotide sequence ID" value="XM_001865442.1"/>
</dbReference>
<dbReference type="SMR" id="B0X755"/>
<dbReference type="FunCoup" id="B0X755">
    <property type="interactions" value="59"/>
</dbReference>
<dbReference type="STRING" id="7176.B0X755"/>
<dbReference type="EnsemblMetazoa" id="CPIJ015043-RA">
    <property type="protein sequence ID" value="CPIJ015043-PA"/>
    <property type="gene ID" value="CPIJ015043"/>
</dbReference>
<dbReference type="KEGG" id="cqu:CpipJ_CPIJ015043"/>
<dbReference type="VEuPathDB" id="VectorBase:CPIJ015043"/>
<dbReference type="VEuPathDB" id="VectorBase:CQUJHB009727"/>
<dbReference type="eggNOG" id="KOG3695">
    <property type="taxonomic scope" value="Eukaryota"/>
</dbReference>
<dbReference type="HOGENOM" id="CLU_007807_0_0_1"/>
<dbReference type="InParanoid" id="B0X755"/>
<dbReference type="OMA" id="RMPSLVQ"/>
<dbReference type="OrthoDB" id="6287422at2759"/>
<dbReference type="PhylomeDB" id="B0X755"/>
<dbReference type="Proteomes" id="UP000002320">
    <property type="component" value="Unassembled WGS sequence"/>
</dbReference>
<dbReference type="InterPro" id="IPR016024">
    <property type="entry name" value="ARM-type_fold"/>
</dbReference>
<dbReference type="InterPro" id="IPR019384">
    <property type="entry name" value="FHIP"/>
</dbReference>
<dbReference type="InterPro" id="IPR045669">
    <property type="entry name" value="FHIP_C"/>
</dbReference>
<dbReference type="InterPro" id="IPR045668">
    <property type="entry name" value="FHIP_KELAA_motif"/>
</dbReference>
<dbReference type="PANTHER" id="PTHR21705:SF11">
    <property type="entry name" value="FHIP FAMILY PROTEIN CG3558"/>
    <property type="match status" value="1"/>
</dbReference>
<dbReference type="PANTHER" id="PTHR21705">
    <property type="entry name" value="RAI16 PROTEIN-RELATED"/>
    <property type="match status" value="1"/>
</dbReference>
<dbReference type="Pfam" id="PF19314">
    <property type="entry name" value="DUF5917"/>
    <property type="match status" value="1"/>
</dbReference>
<dbReference type="Pfam" id="PF19311">
    <property type="entry name" value="KELAA"/>
    <property type="match status" value="1"/>
</dbReference>
<dbReference type="Pfam" id="PF10257">
    <property type="entry name" value="RAI16-like"/>
    <property type="match status" value="1"/>
</dbReference>
<dbReference type="SUPFAM" id="SSF48371">
    <property type="entry name" value="ARM repeat"/>
    <property type="match status" value="1"/>
</dbReference>
<sequence>MAKFTLSSTGYCWLNNRGQSHDDVLGVVTHLDHMVTLLLVELHHCNKLSLPGAPAPPAPCLEHLLSENLLDKLYEWGVKTGRYGNAVRLEQLKLYEQLVSHSRHQLLVHEPFLRPLLKILDSSQNEIYPPDVEKRLVILLNQLCVALMQNVHLLDLFFFSNAQQNGNGGHTNFIIFSLLIPYVHREGSLGHQARDALLLCMALSQKNSNVGKYIATYSSICPVLVTGLGGLYSRLPNQIDIKSVDWYRITTDDVTEMPELTLFMNSLEFCNAVVQVAHTAIRQQLLDFLYQGFLVPVLGPAILQTNVESQVSAMAYLDLIVRSVSEPGLIQIIVRFLLDTDKFDGQRILDVLVERLNSNDSRLCMITLSLFDTLLALNCEDLMLELMLKYLLNCQHVPISHRYKVNRSDPYGSAVEYFLNVAPDIMKKVNNVLNTNNYNGNGSSAGNGGRQTISKTIGANWNHYGMNTGETLLASYQAYLLDARNRITQCKHACDQWNNIYRYQKLSKLVNSGVNGGGHSGEDVRTYKVQMIKNFLAEFTTTAPDSAVELLLDQQQQDHRSSQCQSPAQQHLHQQQQLQATTKQLDSLQSLGDSSGYESLNIMTICSGGGSAGGSEDGRRHESWKVSSVKEDTVVDLDLSEDLFAQGTVSLGPFLTAIWGKLQTFTSNCLYVNLHLTGLISHLAWFPLPLLHSILLRPDIPTTSDTPSFHQVLKILKQQIDAELPECEESLEIVDVARSFLVDREFRLINMRKNAIESNVVLGGSGPGGPRLSNGGGGTGSSITSSLSQTTPMQLTPSSSYDPFKRNDTKRKSITNSFSSIFRRPGSSGGSNSNNSTSGSLGGSSSVTPSLSASQHHLPPSGSGSSNSSPSTTTTTGSSGVSSLLMVGSSRRESREAETQFMDHPSLPVGIGSGTVGGGGAAGPASLTSMAQPGSGHSSLEYSLVNGVGSERQRDLAVCAVVLDEWLKELSAITQEQSLVMVAAATSEQQPNRSVVS</sequence>
<protein>
    <recommendedName>
        <fullName>FHIP family protein CPIJ015043</fullName>
    </recommendedName>
</protein>
<comment type="similarity">
    <text evidence="2">Belongs to the FHIP family.</text>
</comment>
<name>U518_CULQU</name>